<accession>A4SCQ9</accession>
<gene>
    <name evidence="1" type="primary">rplC</name>
    <name type="ordered locus">Cvib_0246</name>
</gene>
<reference key="1">
    <citation type="submission" date="2007-03" db="EMBL/GenBank/DDBJ databases">
        <title>Complete sequence of Prosthecochloris vibrioformis DSM 265.</title>
        <authorList>
            <consortium name="US DOE Joint Genome Institute"/>
            <person name="Copeland A."/>
            <person name="Lucas S."/>
            <person name="Lapidus A."/>
            <person name="Barry K."/>
            <person name="Detter J.C."/>
            <person name="Glavina del Rio T."/>
            <person name="Hammon N."/>
            <person name="Israni S."/>
            <person name="Pitluck S."/>
            <person name="Schmutz J."/>
            <person name="Larimer F."/>
            <person name="Land M."/>
            <person name="Hauser L."/>
            <person name="Mikhailova N."/>
            <person name="Li T."/>
            <person name="Overmann J."/>
            <person name="Schuster S.C."/>
            <person name="Bryant D.A."/>
            <person name="Richardson P."/>
        </authorList>
    </citation>
    <scope>NUCLEOTIDE SEQUENCE [LARGE SCALE GENOMIC DNA]</scope>
    <source>
        <strain>DSM 265 / 1930</strain>
    </source>
</reference>
<protein>
    <recommendedName>
        <fullName evidence="1">Large ribosomal subunit protein uL3</fullName>
    </recommendedName>
    <alternativeName>
        <fullName evidence="3">50S ribosomal protein L3</fullName>
    </alternativeName>
</protein>
<sequence length="209" mass="22175">MGAILGKKIGMTRLYNEKREAVPCTIIQAGPCFVTQVKSAGIDGYDAYQVGIGERKEAKVTKPMLGHYKKAGVAPGYMTAEFDTSMFDGELTAGSPVLVESFTEGEIVKVQGVSKGKGFAGVVKRHNFGGGQRTHGQSDRLRAPGSIGGASDPSKTFKGTKMGGRMGSDTITVRNLQVIKIMPESSLIMVKGSVPGPKNSYVRIVSTKK</sequence>
<keyword id="KW-0687">Ribonucleoprotein</keyword>
<keyword id="KW-0689">Ribosomal protein</keyword>
<keyword id="KW-0694">RNA-binding</keyword>
<keyword id="KW-0699">rRNA-binding</keyword>
<feature type="chain" id="PRO_1000086453" description="Large ribosomal subunit protein uL3">
    <location>
        <begin position="1"/>
        <end position="209"/>
    </location>
</feature>
<feature type="region of interest" description="Disordered" evidence="2">
    <location>
        <begin position="127"/>
        <end position="166"/>
    </location>
</feature>
<name>RL3_CHLPM</name>
<comment type="function">
    <text evidence="1">One of the primary rRNA binding proteins, it binds directly near the 3'-end of the 23S rRNA, where it nucleates assembly of the 50S subunit.</text>
</comment>
<comment type="subunit">
    <text evidence="1">Part of the 50S ribosomal subunit. Forms a cluster with proteins L14 and L19.</text>
</comment>
<comment type="similarity">
    <text evidence="1">Belongs to the universal ribosomal protein uL3 family.</text>
</comment>
<proteinExistence type="inferred from homology"/>
<dbReference type="EMBL" id="CP000607">
    <property type="protein sequence ID" value="ABP36268.1"/>
    <property type="molecule type" value="Genomic_DNA"/>
</dbReference>
<dbReference type="SMR" id="A4SCQ9"/>
<dbReference type="STRING" id="290318.Cvib_0246"/>
<dbReference type="KEGG" id="pvi:Cvib_0246"/>
<dbReference type="eggNOG" id="COG0087">
    <property type="taxonomic scope" value="Bacteria"/>
</dbReference>
<dbReference type="HOGENOM" id="CLU_044142_4_1_10"/>
<dbReference type="OrthoDB" id="9806135at2"/>
<dbReference type="GO" id="GO:0022625">
    <property type="term" value="C:cytosolic large ribosomal subunit"/>
    <property type="evidence" value="ECO:0007669"/>
    <property type="project" value="TreeGrafter"/>
</dbReference>
<dbReference type="GO" id="GO:0019843">
    <property type="term" value="F:rRNA binding"/>
    <property type="evidence" value="ECO:0007669"/>
    <property type="project" value="UniProtKB-UniRule"/>
</dbReference>
<dbReference type="GO" id="GO:0003735">
    <property type="term" value="F:structural constituent of ribosome"/>
    <property type="evidence" value="ECO:0007669"/>
    <property type="project" value="InterPro"/>
</dbReference>
<dbReference type="GO" id="GO:0006412">
    <property type="term" value="P:translation"/>
    <property type="evidence" value="ECO:0007669"/>
    <property type="project" value="UniProtKB-UniRule"/>
</dbReference>
<dbReference type="FunFam" id="2.40.30.10:FF:000047">
    <property type="entry name" value="50S ribosomal protein L3"/>
    <property type="match status" value="1"/>
</dbReference>
<dbReference type="FunFam" id="3.30.160.810:FF:000001">
    <property type="entry name" value="50S ribosomal protein L3"/>
    <property type="match status" value="1"/>
</dbReference>
<dbReference type="Gene3D" id="3.30.160.810">
    <property type="match status" value="1"/>
</dbReference>
<dbReference type="Gene3D" id="2.40.30.10">
    <property type="entry name" value="Translation factors"/>
    <property type="match status" value="1"/>
</dbReference>
<dbReference type="HAMAP" id="MF_01325_B">
    <property type="entry name" value="Ribosomal_uL3_B"/>
    <property type="match status" value="1"/>
</dbReference>
<dbReference type="InterPro" id="IPR000597">
    <property type="entry name" value="Ribosomal_uL3"/>
</dbReference>
<dbReference type="InterPro" id="IPR019927">
    <property type="entry name" value="Ribosomal_uL3_bac/org-type"/>
</dbReference>
<dbReference type="InterPro" id="IPR009000">
    <property type="entry name" value="Transl_B-barrel_sf"/>
</dbReference>
<dbReference type="NCBIfam" id="TIGR03625">
    <property type="entry name" value="L3_bact"/>
    <property type="match status" value="1"/>
</dbReference>
<dbReference type="PANTHER" id="PTHR11229">
    <property type="entry name" value="50S RIBOSOMAL PROTEIN L3"/>
    <property type="match status" value="1"/>
</dbReference>
<dbReference type="PANTHER" id="PTHR11229:SF16">
    <property type="entry name" value="LARGE RIBOSOMAL SUBUNIT PROTEIN UL3C"/>
    <property type="match status" value="1"/>
</dbReference>
<dbReference type="Pfam" id="PF00297">
    <property type="entry name" value="Ribosomal_L3"/>
    <property type="match status" value="1"/>
</dbReference>
<dbReference type="SUPFAM" id="SSF50447">
    <property type="entry name" value="Translation proteins"/>
    <property type="match status" value="1"/>
</dbReference>
<organism>
    <name type="scientific">Chlorobium phaeovibrioides (strain DSM 265 / 1930)</name>
    <name type="common">Prosthecochloris vibrioformis (strain DSM 265)</name>
    <dbReference type="NCBI Taxonomy" id="290318"/>
    <lineage>
        <taxon>Bacteria</taxon>
        <taxon>Pseudomonadati</taxon>
        <taxon>Chlorobiota</taxon>
        <taxon>Chlorobiia</taxon>
        <taxon>Chlorobiales</taxon>
        <taxon>Chlorobiaceae</taxon>
        <taxon>Chlorobium/Pelodictyon group</taxon>
        <taxon>Chlorobium</taxon>
    </lineage>
</organism>
<evidence type="ECO:0000255" key="1">
    <source>
        <dbReference type="HAMAP-Rule" id="MF_01325"/>
    </source>
</evidence>
<evidence type="ECO:0000256" key="2">
    <source>
        <dbReference type="SAM" id="MobiDB-lite"/>
    </source>
</evidence>
<evidence type="ECO:0000305" key="3"/>